<protein>
    <recommendedName>
        <fullName>FAD synthase</fullName>
        <ecNumber>2.7.7.2</ecNumber>
    </recommendedName>
    <alternativeName>
        <fullName>FAD pyrophosphorylase</fullName>
    </alternativeName>
    <alternativeName>
        <fullName>FMN adenylyltransferase</fullName>
    </alternativeName>
    <alternativeName>
        <fullName>Flavin adenine dinucleotide synthase</fullName>
    </alternativeName>
    <domain>
        <recommendedName>
            <fullName>Molybdenum cofactor biosynthesis protein-like region</fullName>
        </recommendedName>
    </domain>
    <domain>
        <recommendedName>
            <fullName>FAD synthase region</fullName>
        </recommendedName>
    </domain>
</protein>
<accession>Q68EH8</accession>
<feature type="chain" id="PRO_0000302740" description="FAD synthase">
    <location>
        <begin position="1"/>
        <end position="497"/>
    </location>
</feature>
<feature type="region of interest" description="Molybdenum cofactor biosynthesis protein-like">
    <location>
        <begin position="19"/>
        <end position="110"/>
    </location>
</feature>
<feature type="region of interest" description="FAD synthase">
    <location>
        <begin position="308"/>
        <end position="465"/>
    </location>
</feature>
<comment type="function">
    <text evidence="1">Catalyzes the adenylation of flavin mononucleotide (FMN) to form flavin adenine dinucleotide (FAD) coenzyme.</text>
</comment>
<comment type="catalytic activity">
    <reaction>
        <text>FMN + ATP + H(+) = FAD + diphosphate</text>
        <dbReference type="Rhea" id="RHEA:17237"/>
        <dbReference type="ChEBI" id="CHEBI:15378"/>
        <dbReference type="ChEBI" id="CHEBI:30616"/>
        <dbReference type="ChEBI" id="CHEBI:33019"/>
        <dbReference type="ChEBI" id="CHEBI:57692"/>
        <dbReference type="ChEBI" id="CHEBI:58210"/>
        <dbReference type="EC" id="2.7.7.2"/>
    </reaction>
</comment>
<comment type="cofactor">
    <cofactor evidence="1">
        <name>Mg(2+)</name>
        <dbReference type="ChEBI" id="CHEBI:18420"/>
    </cofactor>
</comment>
<comment type="pathway">
    <text>Cofactor biosynthesis; FAD biosynthesis; FAD from FMN: step 1/1.</text>
</comment>
<comment type="subcellular location">
    <subcellularLocation>
        <location evidence="1">Cytoplasm</location>
    </subcellularLocation>
</comment>
<comment type="domain">
    <text>The molybdenum cofactor biosynthesis protein-like region may not be functional.</text>
</comment>
<comment type="similarity">
    <text evidence="2">In the N-terminal section; belongs to the MoaB/Mog family.</text>
</comment>
<comment type="similarity">
    <text evidence="2">In the C-terminal section; belongs to the PAPS reductase family. FAD1 subfamily.</text>
</comment>
<name>FAD1_DANRE</name>
<evidence type="ECO:0000250" key="1"/>
<evidence type="ECO:0000305" key="2"/>
<keyword id="KW-0067">ATP-binding</keyword>
<keyword id="KW-0963">Cytoplasm</keyword>
<keyword id="KW-0274">FAD</keyword>
<keyword id="KW-0285">Flavoprotein</keyword>
<keyword id="KW-0288">FMN</keyword>
<keyword id="KW-0547">Nucleotide-binding</keyword>
<keyword id="KW-0548">Nucleotidyltransferase</keyword>
<keyword id="KW-1185">Reference proteome</keyword>
<keyword id="KW-0808">Transferase</keyword>
<sequence length="497" mass="55610">MAQNCNTSSTQKNGSATAAILIIGDEILKGHTVDTNSAFLCRGLRKLGITVERITVVPDVQEVIAKEVSQLSSTVTHLITSGGIGPTHDDVTFESVAMAFGEELYAHPEMTKLVEGFFGTVTSDSAPMKLAMVPASAKLNFGIDPQTGQRNRFPLVSVHNVYIFPGIPSLLEKSFNGLSHLFSGSGTTFHTREVFVNADETEIAQSLSKLQAGWGKRVSLGSYPDWLSNYHRVRLVLDTDSVEEVERARTQLIEELPKGSVVPLVTDPISVAAQEVYSLSKSETQLGKKVAAALGTIEMALDKYSVNEICVGFNGGKDCTALLHLYYAALKRRYPDGKDRLKALYIRIVSPFPEMERFLQDTIKRYDLELFSVEGSIRQALNEVKERRPDLRAVLMGTRRTDPYSHTLTPFCPTDPGWPDYMRVNPLLEWTYHDIWSFLRTLYVPYCILYDKGYTSLGSMDNSYRNPSLKMVDERGATRYKPAYMLENEEEERNSRE</sequence>
<gene>
    <name type="primary">flad1</name>
    <name type="ORF">zgc:91843</name>
</gene>
<organism>
    <name type="scientific">Danio rerio</name>
    <name type="common">Zebrafish</name>
    <name type="synonym">Brachydanio rerio</name>
    <dbReference type="NCBI Taxonomy" id="7955"/>
    <lineage>
        <taxon>Eukaryota</taxon>
        <taxon>Metazoa</taxon>
        <taxon>Chordata</taxon>
        <taxon>Craniata</taxon>
        <taxon>Vertebrata</taxon>
        <taxon>Euteleostomi</taxon>
        <taxon>Actinopterygii</taxon>
        <taxon>Neopterygii</taxon>
        <taxon>Teleostei</taxon>
        <taxon>Ostariophysi</taxon>
        <taxon>Cypriniformes</taxon>
        <taxon>Danionidae</taxon>
        <taxon>Danioninae</taxon>
        <taxon>Danio</taxon>
    </lineage>
</organism>
<reference key="1">
    <citation type="submission" date="2004-08" db="EMBL/GenBank/DDBJ databases">
        <authorList>
            <consortium name="NIH - Zebrafish Gene Collection (ZGC) project"/>
        </authorList>
    </citation>
    <scope>NUCLEOTIDE SEQUENCE [LARGE SCALE MRNA]</scope>
    <source>
        <tissue>Embryo</tissue>
    </source>
</reference>
<proteinExistence type="evidence at transcript level"/>
<dbReference type="EC" id="2.7.7.2"/>
<dbReference type="EMBL" id="BC080254">
    <property type="protein sequence ID" value="AAH80254.1"/>
    <property type="molecule type" value="mRNA"/>
</dbReference>
<dbReference type="RefSeq" id="NP_001003997.1">
    <property type="nucleotide sequence ID" value="NM_001003997.1"/>
</dbReference>
<dbReference type="SMR" id="Q68EH8"/>
<dbReference type="FunCoup" id="Q68EH8">
    <property type="interactions" value="936"/>
</dbReference>
<dbReference type="STRING" id="7955.ENSDARP00000094012"/>
<dbReference type="PaxDb" id="7955-ENSDARP00000094012"/>
<dbReference type="Ensembl" id="ENSDART00000103235">
    <property type="protein sequence ID" value="ENSDARP00000094012"/>
    <property type="gene ID" value="ENSDARG00000070390"/>
</dbReference>
<dbReference type="GeneID" id="445492"/>
<dbReference type="KEGG" id="dre:445492"/>
<dbReference type="AGR" id="ZFIN:ZDB-GENE-040822-44"/>
<dbReference type="CTD" id="80308"/>
<dbReference type="ZFIN" id="ZDB-GENE-040822-44">
    <property type="gene designation" value="flad1"/>
</dbReference>
<dbReference type="eggNOG" id="KOG2644">
    <property type="taxonomic scope" value="Eukaryota"/>
</dbReference>
<dbReference type="HOGENOM" id="CLU_030805_8_0_1"/>
<dbReference type="InParanoid" id="Q68EH8"/>
<dbReference type="OrthoDB" id="270728at2759"/>
<dbReference type="PhylomeDB" id="Q68EH8"/>
<dbReference type="TreeFam" id="TF314056"/>
<dbReference type="Reactome" id="R-DRE-196843">
    <property type="pathway name" value="Vitamin B2 (riboflavin) metabolism"/>
</dbReference>
<dbReference type="UniPathway" id="UPA00277">
    <property type="reaction ID" value="UER00407"/>
</dbReference>
<dbReference type="PRO" id="PR:Q68EH8"/>
<dbReference type="Proteomes" id="UP000000437">
    <property type="component" value="Chromosome 16"/>
</dbReference>
<dbReference type="Bgee" id="ENSDARG00000070390">
    <property type="expression patterns" value="Expressed in granulocyte and 23 other cell types or tissues"/>
</dbReference>
<dbReference type="ExpressionAtlas" id="Q68EH8">
    <property type="expression patterns" value="baseline"/>
</dbReference>
<dbReference type="GO" id="GO:0005737">
    <property type="term" value="C:cytoplasm"/>
    <property type="evidence" value="ECO:0007669"/>
    <property type="project" value="UniProtKB-SubCell"/>
</dbReference>
<dbReference type="GO" id="GO:0005524">
    <property type="term" value="F:ATP binding"/>
    <property type="evidence" value="ECO:0007669"/>
    <property type="project" value="UniProtKB-KW"/>
</dbReference>
<dbReference type="GO" id="GO:0003919">
    <property type="term" value="F:FMN adenylyltransferase activity"/>
    <property type="evidence" value="ECO:0000318"/>
    <property type="project" value="GO_Central"/>
</dbReference>
<dbReference type="GO" id="GO:0006747">
    <property type="term" value="P:FAD biosynthetic process"/>
    <property type="evidence" value="ECO:0000318"/>
    <property type="project" value="GO_Central"/>
</dbReference>
<dbReference type="CDD" id="cd00885">
    <property type="entry name" value="cinA"/>
    <property type="match status" value="1"/>
</dbReference>
<dbReference type="CDD" id="cd23948">
    <property type="entry name" value="FAD_synthase"/>
    <property type="match status" value="1"/>
</dbReference>
<dbReference type="FunFam" id="3.40.50.620:FF:000113">
    <property type="entry name" value="FAD synthase"/>
    <property type="match status" value="1"/>
</dbReference>
<dbReference type="Gene3D" id="3.40.50.620">
    <property type="entry name" value="HUPs"/>
    <property type="match status" value="1"/>
</dbReference>
<dbReference type="Gene3D" id="3.40.980.10">
    <property type="entry name" value="MoaB/Mog-like domain"/>
    <property type="match status" value="1"/>
</dbReference>
<dbReference type="InterPro" id="IPR012183">
    <property type="entry name" value="FAD_synth_MoaB/Mog-bd"/>
</dbReference>
<dbReference type="InterPro" id="IPR056596">
    <property type="entry name" value="FLAD1_M"/>
</dbReference>
<dbReference type="InterPro" id="IPR036425">
    <property type="entry name" value="MoaB/Mog-like_dom_sf"/>
</dbReference>
<dbReference type="InterPro" id="IPR001453">
    <property type="entry name" value="MoaB/Mog_dom"/>
</dbReference>
<dbReference type="InterPro" id="IPR002500">
    <property type="entry name" value="PAPS_reduct_dom"/>
</dbReference>
<dbReference type="InterPro" id="IPR014729">
    <property type="entry name" value="Rossmann-like_a/b/a_fold"/>
</dbReference>
<dbReference type="PANTHER" id="PTHR23293:SF9">
    <property type="entry name" value="FAD SYNTHASE"/>
    <property type="match status" value="1"/>
</dbReference>
<dbReference type="PANTHER" id="PTHR23293">
    <property type="entry name" value="FAD SYNTHETASE-RELATED FMN ADENYLYLTRANSFERASE"/>
    <property type="match status" value="1"/>
</dbReference>
<dbReference type="Pfam" id="PF24102">
    <property type="entry name" value="FLAD1_M"/>
    <property type="match status" value="1"/>
</dbReference>
<dbReference type="Pfam" id="PF00994">
    <property type="entry name" value="MoCF_biosynth"/>
    <property type="match status" value="1"/>
</dbReference>
<dbReference type="Pfam" id="PF01507">
    <property type="entry name" value="PAPS_reduct"/>
    <property type="match status" value="1"/>
</dbReference>
<dbReference type="PIRSF" id="PIRSF036620">
    <property type="entry name" value="MPTbdFAD"/>
    <property type="match status" value="1"/>
</dbReference>
<dbReference type="SMART" id="SM00852">
    <property type="entry name" value="MoCF_biosynth"/>
    <property type="match status" value="1"/>
</dbReference>
<dbReference type="SUPFAM" id="SSF52402">
    <property type="entry name" value="Adenine nucleotide alpha hydrolases-like"/>
    <property type="match status" value="1"/>
</dbReference>
<dbReference type="SUPFAM" id="SSF53218">
    <property type="entry name" value="Molybdenum cofactor biosynthesis proteins"/>
    <property type="match status" value="1"/>
</dbReference>